<accession>B4RR62</accession>
<protein>
    <recommendedName>
        <fullName evidence="1">Acyl carrier protein</fullName>
        <shortName evidence="1">ACP</shortName>
    </recommendedName>
</protein>
<organism>
    <name type="scientific">Neisseria gonorrhoeae (strain NCCP11945)</name>
    <dbReference type="NCBI Taxonomy" id="521006"/>
    <lineage>
        <taxon>Bacteria</taxon>
        <taxon>Pseudomonadati</taxon>
        <taxon>Pseudomonadota</taxon>
        <taxon>Betaproteobacteria</taxon>
        <taxon>Neisseriales</taxon>
        <taxon>Neisseriaceae</taxon>
        <taxon>Neisseria</taxon>
    </lineage>
</organism>
<keyword id="KW-0963">Cytoplasm</keyword>
<keyword id="KW-0275">Fatty acid biosynthesis</keyword>
<keyword id="KW-0276">Fatty acid metabolism</keyword>
<keyword id="KW-0444">Lipid biosynthesis</keyword>
<keyword id="KW-0443">Lipid metabolism</keyword>
<keyword id="KW-0596">Phosphopantetheine</keyword>
<keyword id="KW-0597">Phosphoprotein</keyword>
<gene>
    <name evidence="1" type="primary">acpP</name>
    <name type="ordered locus">NGK_2520</name>
</gene>
<comment type="function">
    <text evidence="1">Carrier of the growing fatty acid chain in fatty acid biosynthesis.</text>
</comment>
<comment type="pathway">
    <text evidence="1">Lipid metabolism; fatty acid biosynthesis.</text>
</comment>
<comment type="subcellular location">
    <subcellularLocation>
        <location evidence="1">Cytoplasm</location>
    </subcellularLocation>
</comment>
<comment type="PTM">
    <text evidence="1">4'-phosphopantetheine is transferred from CoA to a specific serine of apo-ACP by AcpS. This modification is essential for activity because fatty acids are bound in thioester linkage to the sulfhydryl of the prosthetic group.</text>
</comment>
<comment type="similarity">
    <text evidence="1">Belongs to the acyl carrier protein (ACP) family.</text>
</comment>
<feature type="chain" id="PRO_1000139045" description="Acyl carrier protein">
    <location>
        <begin position="1"/>
        <end position="78"/>
    </location>
</feature>
<feature type="domain" description="Carrier" evidence="2">
    <location>
        <begin position="2"/>
        <end position="77"/>
    </location>
</feature>
<feature type="modified residue" description="O-(pantetheine 4'-phosphoryl)serine" evidence="2">
    <location>
        <position position="37"/>
    </location>
</feature>
<reference key="1">
    <citation type="journal article" date="2008" name="J. Bacteriol.">
        <title>Complete genome sequence of Neisseria gonorrhoeae NCCP11945.</title>
        <authorList>
            <person name="Chung G.T."/>
            <person name="Yoo J.S."/>
            <person name="Oh H.B."/>
            <person name="Lee Y.S."/>
            <person name="Cha S.H."/>
            <person name="Kim S.J."/>
            <person name="Yoo C.K."/>
        </authorList>
    </citation>
    <scope>NUCLEOTIDE SEQUENCE [LARGE SCALE GENOMIC DNA]</scope>
    <source>
        <strain>NCCP11945</strain>
    </source>
</reference>
<evidence type="ECO:0000255" key="1">
    <source>
        <dbReference type="HAMAP-Rule" id="MF_01217"/>
    </source>
</evidence>
<evidence type="ECO:0000255" key="2">
    <source>
        <dbReference type="PROSITE-ProRule" id="PRU00258"/>
    </source>
</evidence>
<proteinExistence type="inferred from homology"/>
<sequence>MSNIEQQVKKIIAEQLGVNEADVKNESSFQDDLGADSLDTVELVMALEEAFGCEIPDEDAEKITTVQLAIDYINAHNG</sequence>
<dbReference type="EMBL" id="CP001050">
    <property type="protein sequence ID" value="ACF31120.1"/>
    <property type="molecule type" value="Genomic_DNA"/>
</dbReference>
<dbReference type="RefSeq" id="WP_003689968.1">
    <property type="nucleotide sequence ID" value="NC_011035.1"/>
</dbReference>
<dbReference type="SMR" id="B4RR62"/>
<dbReference type="GeneID" id="66754385"/>
<dbReference type="KEGG" id="ngk:NGK_2520"/>
<dbReference type="HOGENOM" id="CLU_108696_5_1_4"/>
<dbReference type="UniPathway" id="UPA00094"/>
<dbReference type="Proteomes" id="UP000002564">
    <property type="component" value="Chromosome"/>
</dbReference>
<dbReference type="GO" id="GO:0005829">
    <property type="term" value="C:cytosol"/>
    <property type="evidence" value="ECO:0007669"/>
    <property type="project" value="TreeGrafter"/>
</dbReference>
<dbReference type="GO" id="GO:0016020">
    <property type="term" value="C:membrane"/>
    <property type="evidence" value="ECO:0007669"/>
    <property type="project" value="GOC"/>
</dbReference>
<dbReference type="GO" id="GO:0000035">
    <property type="term" value="F:acyl binding"/>
    <property type="evidence" value="ECO:0007669"/>
    <property type="project" value="TreeGrafter"/>
</dbReference>
<dbReference type="GO" id="GO:0000036">
    <property type="term" value="F:acyl carrier activity"/>
    <property type="evidence" value="ECO:0007669"/>
    <property type="project" value="UniProtKB-UniRule"/>
</dbReference>
<dbReference type="GO" id="GO:0009245">
    <property type="term" value="P:lipid A biosynthetic process"/>
    <property type="evidence" value="ECO:0007669"/>
    <property type="project" value="TreeGrafter"/>
</dbReference>
<dbReference type="FunFam" id="1.10.1200.10:FF:000001">
    <property type="entry name" value="Acyl carrier protein"/>
    <property type="match status" value="1"/>
</dbReference>
<dbReference type="Gene3D" id="1.10.1200.10">
    <property type="entry name" value="ACP-like"/>
    <property type="match status" value="1"/>
</dbReference>
<dbReference type="HAMAP" id="MF_01217">
    <property type="entry name" value="Acyl_carrier"/>
    <property type="match status" value="1"/>
</dbReference>
<dbReference type="InterPro" id="IPR003231">
    <property type="entry name" value="ACP"/>
</dbReference>
<dbReference type="InterPro" id="IPR036736">
    <property type="entry name" value="ACP-like_sf"/>
</dbReference>
<dbReference type="InterPro" id="IPR009081">
    <property type="entry name" value="PP-bd_ACP"/>
</dbReference>
<dbReference type="InterPro" id="IPR006162">
    <property type="entry name" value="Ppantetheine_attach_site"/>
</dbReference>
<dbReference type="NCBIfam" id="TIGR00517">
    <property type="entry name" value="acyl_carrier"/>
    <property type="match status" value="1"/>
</dbReference>
<dbReference type="NCBIfam" id="NF002148">
    <property type="entry name" value="PRK00982.1-2"/>
    <property type="match status" value="1"/>
</dbReference>
<dbReference type="NCBIfam" id="NF002149">
    <property type="entry name" value="PRK00982.1-3"/>
    <property type="match status" value="1"/>
</dbReference>
<dbReference type="NCBIfam" id="NF002150">
    <property type="entry name" value="PRK00982.1-4"/>
    <property type="match status" value="1"/>
</dbReference>
<dbReference type="NCBIfam" id="NF002151">
    <property type="entry name" value="PRK00982.1-5"/>
    <property type="match status" value="1"/>
</dbReference>
<dbReference type="PANTHER" id="PTHR20863">
    <property type="entry name" value="ACYL CARRIER PROTEIN"/>
    <property type="match status" value="1"/>
</dbReference>
<dbReference type="PANTHER" id="PTHR20863:SF76">
    <property type="entry name" value="CARRIER DOMAIN-CONTAINING PROTEIN"/>
    <property type="match status" value="1"/>
</dbReference>
<dbReference type="Pfam" id="PF00550">
    <property type="entry name" value="PP-binding"/>
    <property type="match status" value="1"/>
</dbReference>
<dbReference type="SUPFAM" id="SSF47336">
    <property type="entry name" value="ACP-like"/>
    <property type="match status" value="1"/>
</dbReference>
<dbReference type="PROSITE" id="PS50075">
    <property type="entry name" value="CARRIER"/>
    <property type="match status" value="1"/>
</dbReference>
<dbReference type="PROSITE" id="PS00012">
    <property type="entry name" value="PHOSPHOPANTETHEINE"/>
    <property type="match status" value="1"/>
</dbReference>
<name>ACP_NEIG2</name>